<evidence type="ECO:0000250" key="1"/>
<evidence type="ECO:0000305" key="2"/>
<organism>
    <name type="scientific">Ajellomyces dermatitidis (strain ER-3 / ATCC MYA-2586)</name>
    <name type="common">Blastomyces dermatitidis</name>
    <dbReference type="NCBI Taxonomy" id="559297"/>
    <lineage>
        <taxon>Eukaryota</taxon>
        <taxon>Fungi</taxon>
        <taxon>Dikarya</taxon>
        <taxon>Ascomycota</taxon>
        <taxon>Pezizomycotina</taxon>
        <taxon>Eurotiomycetes</taxon>
        <taxon>Eurotiomycetidae</taxon>
        <taxon>Onygenales</taxon>
        <taxon>Ajellomycetaceae</taxon>
        <taxon>Blastomyces</taxon>
    </lineage>
</organism>
<reference key="1">
    <citation type="journal article" date="2015" name="PLoS Genet.">
        <title>The dynamic genome and transcriptome of the human fungal pathogen Blastomyces and close relative Emmonsia.</title>
        <authorList>
            <person name="Munoz J.F."/>
            <person name="Gauthier G.M."/>
            <person name="Desjardins C.A."/>
            <person name="Gallo J.E."/>
            <person name="Holder J."/>
            <person name="Sullivan T.D."/>
            <person name="Marty A.J."/>
            <person name="Carmen J.C."/>
            <person name="Chen Z."/>
            <person name="Ding L."/>
            <person name="Gujja S."/>
            <person name="Magrini V."/>
            <person name="Misas E."/>
            <person name="Mitreva M."/>
            <person name="Priest M."/>
            <person name="Saif S."/>
            <person name="Whiston E.A."/>
            <person name="Young S."/>
            <person name="Zeng Q."/>
            <person name="Goldman W.E."/>
            <person name="Mardis E.R."/>
            <person name="Taylor J.W."/>
            <person name="McEwen J.G."/>
            <person name="Clay O.K."/>
            <person name="Klein B.S."/>
            <person name="Cuomo C.A."/>
        </authorList>
    </citation>
    <scope>NUCLEOTIDE SEQUENCE [LARGE SCALE GENOMIC DNA]</scope>
    <source>
        <strain>ER-3 / ATCC MYA-2586</strain>
    </source>
</reference>
<protein>
    <recommendedName>
        <fullName>Probable Xaa-Pro aminopeptidase BDCG_04966</fullName>
        <ecNumber>3.4.11.9</ecNumber>
    </recommendedName>
    <alternativeName>
        <fullName>Aminoacylproline aminopeptidase</fullName>
    </alternativeName>
    <alternativeName>
        <fullName>Prolidase</fullName>
    </alternativeName>
</protein>
<keyword id="KW-0031">Aminopeptidase</keyword>
<keyword id="KW-0378">Hydrolase</keyword>
<keyword id="KW-0464">Manganese</keyword>
<keyword id="KW-0479">Metal-binding</keyword>
<keyword id="KW-0482">Metalloprotease</keyword>
<keyword id="KW-0645">Protease</keyword>
<dbReference type="EC" id="3.4.11.9"/>
<dbReference type="EMBL" id="EQ999977">
    <property type="protein sequence ID" value="EEQ89846.1"/>
    <property type="molecule type" value="Genomic_DNA"/>
</dbReference>
<dbReference type="RefSeq" id="XP_045276689.1">
    <property type="nucleotide sequence ID" value="XM_045420615.1"/>
</dbReference>
<dbReference type="SMR" id="C5GKT2"/>
<dbReference type="STRING" id="559297.C5GKT2"/>
<dbReference type="GeneID" id="69027032"/>
<dbReference type="VEuPathDB" id="FungiDB:BDCG_04966"/>
<dbReference type="eggNOG" id="KOG2737">
    <property type="taxonomic scope" value="Eukaryota"/>
</dbReference>
<dbReference type="HOGENOM" id="CLU_017266_1_2_1"/>
<dbReference type="OMA" id="YELRMIR"/>
<dbReference type="GO" id="GO:0030145">
    <property type="term" value="F:manganese ion binding"/>
    <property type="evidence" value="ECO:0007669"/>
    <property type="project" value="InterPro"/>
</dbReference>
<dbReference type="GO" id="GO:0070006">
    <property type="term" value="F:metalloaminopeptidase activity"/>
    <property type="evidence" value="ECO:0007669"/>
    <property type="project" value="InterPro"/>
</dbReference>
<dbReference type="GO" id="GO:0006508">
    <property type="term" value="P:proteolysis"/>
    <property type="evidence" value="ECO:0007669"/>
    <property type="project" value="UniProtKB-KW"/>
</dbReference>
<dbReference type="CDD" id="cd01087">
    <property type="entry name" value="Prolidase"/>
    <property type="match status" value="1"/>
</dbReference>
<dbReference type="Gene3D" id="3.90.230.10">
    <property type="entry name" value="Creatinase/methionine aminopeptidase superfamily"/>
    <property type="match status" value="1"/>
</dbReference>
<dbReference type="Gene3D" id="3.40.350.10">
    <property type="entry name" value="Creatinase/prolidase N-terminal domain"/>
    <property type="match status" value="1"/>
</dbReference>
<dbReference type="InterPro" id="IPR007865">
    <property type="entry name" value="Aminopep_P_N"/>
</dbReference>
<dbReference type="InterPro" id="IPR029149">
    <property type="entry name" value="Creatin/AminoP/Spt16_N"/>
</dbReference>
<dbReference type="InterPro" id="IPR036005">
    <property type="entry name" value="Creatinase/aminopeptidase-like"/>
</dbReference>
<dbReference type="InterPro" id="IPR000994">
    <property type="entry name" value="Pept_M24"/>
</dbReference>
<dbReference type="InterPro" id="IPR001131">
    <property type="entry name" value="Peptidase_M24B_aminopep-P_CS"/>
</dbReference>
<dbReference type="InterPro" id="IPR052433">
    <property type="entry name" value="X-Pro_dipept-like"/>
</dbReference>
<dbReference type="PANTHER" id="PTHR43226">
    <property type="entry name" value="XAA-PRO AMINOPEPTIDASE 3"/>
    <property type="match status" value="1"/>
</dbReference>
<dbReference type="PANTHER" id="PTHR43226:SF3">
    <property type="entry name" value="XAA-PRO AMINOPEPTIDASE AN0832-RELATED"/>
    <property type="match status" value="1"/>
</dbReference>
<dbReference type="Pfam" id="PF05195">
    <property type="entry name" value="AMP_N"/>
    <property type="match status" value="1"/>
</dbReference>
<dbReference type="Pfam" id="PF00557">
    <property type="entry name" value="Peptidase_M24"/>
    <property type="match status" value="1"/>
</dbReference>
<dbReference type="SMART" id="SM01011">
    <property type="entry name" value="AMP_N"/>
    <property type="match status" value="1"/>
</dbReference>
<dbReference type="SUPFAM" id="SSF55920">
    <property type="entry name" value="Creatinase/aminopeptidase"/>
    <property type="match status" value="1"/>
</dbReference>
<dbReference type="SUPFAM" id="SSF53092">
    <property type="entry name" value="Creatinase/prolidase N-terminal domain"/>
    <property type="match status" value="1"/>
</dbReference>
<dbReference type="PROSITE" id="PS00491">
    <property type="entry name" value="PROLINE_PEPTIDASE"/>
    <property type="match status" value="1"/>
</dbReference>
<name>AMPP2_AJEDR</name>
<feature type="chain" id="PRO_0000411818" description="Probable Xaa-Pro aminopeptidase BDCG_04966">
    <location>
        <begin position="1"/>
        <end position="506"/>
    </location>
</feature>
<feature type="binding site" evidence="1">
    <location>
        <position position="285"/>
    </location>
    <ligand>
        <name>Mn(2+)</name>
        <dbReference type="ChEBI" id="CHEBI:29035"/>
        <label>2</label>
    </ligand>
</feature>
<feature type="binding site" evidence="1">
    <location>
        <position position="296"/>
    </location>
    <ligand>
        <name>Mn(2+)</name>
        <dbReference type="ChEBI" id="CHEBI:29035"/>
        <label>1</label>
    </ligand>
</feature>
<feature type="binding site" evidence="1">
    <location>
        <position position="296"/>
    </location>
    <ligand>
        <name>Mn(2+)</name>
        <dbReference type="ChEBI" id="CHEBI:29035"/>
        <label>2</label>
    </ligand>
</feature>
<feature type="binding site" evidence="1">
    <location>
        <position position="433"/>
    </location>
    <ligand>
        <name>Mn(2+)</name>
        <dbReference type="ChEBI" id="CHEBI:29035"/>
        <label>1</label>
    </ligand>
</feature>
<feature type="binding site" evidence="1">
    <location>
        <position position="471"/>
    </location>
    <ligand>
        <name>Mn(2+)</name>
        <dbReference type="ChEBI" id="CHEBI:29035"/>
        <label>1</label>
    </ligand>
</feature>
<feature type="binding site" evidence="1">
    <location>
        <position position="471"/>
    </location>
    <ligand>
        <name>Mn(2+)</name>
        <dbReference type="ChEBI" id="CHEBI:29035"/>
        <label>2</label>
    </ligand>
</feature>
<sequence length="506" mass="56861">MISAIEPKNLLRPHSQPVVTTSTLQPDDECNIELRIEDTTVDKYPAKQHARRVAAEIHRDRGLVYLMGQKSTLYEDSDQERTFRQRRYFFYMSGVDEPDCDLTYDINADKLTLYVPDFDLKRTIWMGPTLGREEALQRFDIDEVKYQSSLDEDVKQWAQNQGRGSTLYLLHESQKPAEKVPNVFIDSKTLKHAMDTSRAIKDEHEIGLIRRANEVSAAAHIDVLRGIRKMSNERDIEASFLNTSVSLGAHKQAYHIIAASGSNAATLHYSKNNEPLKGRQFVCLDAGAEWNCYASDVTRTFPMTSQWPSAEAKHIYKLVEHMQESCIVRVKEGVRYLDLHILAHRSLIRGFLTLGIFKGGTLEEIQNSGASNLFFPHGLGHHIGLEVHDVSPESIMAQDNGDYSDNVLISPNNLSPCTTSSPTLKSGMVVTIEPGIYFSQIALDNAKPEQLKYVDLELVKTYMPVGGVRIEDDILVTKTGYENLTTAPKGDGMLEIIRQGDGSCNI</sequence>
<comment type="function">
    <text evidence="1">Catalyzes the removal of a penultimate prolyl residue from the N-termini of peptides.</text>
</comment>
<comment type="catalytic activity">
    <reaction>
        <text>Release of any N-terminal amino acid, including proline, that is linked to proline, even from a dipeptide or tripeptide.</text>
        <dbReference type="EC" id="3.4.11.9"/>
    </reaction>
</comment>
<comment type="cofactor">
    <cofactor evidence="1">
        <name>Mn(2+)</name>
        <dbReference type="ChEBI" id="CHEBI:29035"/>
    </cofactor>
    <text evidence="1">Binds 2 manganese ions per subunit.</text>
</comment>
<comment type="similarity">
    <text evidence="2">Belongs to the peptidase M24B family.</text>
</comment>
<gene>
    <name type="ORF">BDCG_04966</name>
</gene>
<accession>C5GKT2</accession>
<proteinExistence type="inferred from homology"/>